<protein>
    <recommendedName>
        <fullName evidence="10">Two-component response regulator ORR10</fullName>
    </recommendedName>
    <alternativeName>
        <fullName evidence="8">OsRR10</fullName>
    </alternativeName>
    <alternativeName>
        <fullName evidence="7">OsRRA2</fullName>
    </alternativeName>
</protein>
<sequence>MAVAIEAPFHVLAVDDSLPDRKLIERLLKTSSFQVTTVDSGSKALEFLGLHDHEDSPISTQSDQQEVGVNLIITDYCMPGMTGYDLLKKIKESSYLRDIPVVIMSSDNIPSRINRCLEEGADEFFLKPVRLSDMSKLKPHILKSRCKEHYQQEQHLQSNSESNNSSNPTSENSSSSTSTNSHKRKAVDEEILPHTIRPRHS</sequence>
<keyword id="KW-0932">Cytokinin signaling pathway</keyword>
<keyword id="KW-0539">Nucleus</keyword>
<keyword id="KW-0597">Phosphoprotein</keyword>
<keyword id="KW-1185">Reference proteome</keyword>
<keyword id="KW-0804">Transcription</keyword>
<keyword id="KW-0805">Transcription regulation</keyword>
<keyword id="KW-0902">Two-component regulatory system</keyword>
<gene>
    <name evidence="9" type="primary">RR10</name>
    <name evidence="12" type="ordered locus">Os12g0139400</name>
    <name evidence="11" type="ordered locus">LOC_Os12g04500</name>
    <name evidence="13" type="ORF">OsJ_35177</name>
</gene>
<evidence type="ECO:0000250" key="1">
    <source>
        <dbReference type="UniProtKB" id="Q9ZWS9"/>
    </source>
</evidence>
<evidence type="ECO:0000255" key="2">
    <source>
        <dbReference type="PROSITE-ProRule" id="PRU00169"/>
    </source>
</evidence>
<evidence type="ECO:0000256" key="3">
    <source>
        <dbReference type="SAM" id="MobiDB-lite"/>
    </source>
</evidence>
<evidence type="ECO:0000269" key="4">
    <source>
    </source>
</evidence>
<evidence type="ECO:0000269" key="5">
    <source>
    </source>
</evidence>
<evidence type="ECO:0000269" key="6">
    <source>
    </source>
</evidence>
<evidence type="ECO:0000303" key="7">
    <source>
    </source>
</evidence>
<evidence type="ECO:0000303" key="8">
    <source>
    </source>
</evidence>
<evidence type="ECO:0000303" key="9">
    <source>
    </source>
</evidence>
<evidence type="ECO:0000305" key="10"/>
<evidence type="ECO:0000312" key="11">
    <source>
        <dbReference type="EMBL" id="ABA96406.2"/>
    </source>
</evidence>
<evidence type="ECO:0000312" key="12">
    <source>
        <dbReference type="EMBL" id="BAF29137.2"/>
    </source>
</evidence>
<evidence type="ECO:0000312" key="13">
    <source>
        <dbReference type="EMBL" id="EEE52746.1"/>
    </source>
</evidence>
<organism>
    <name type="scientific">Oryza sativa subsp. japonica</name>
    <name type="common">Rice</name>
    <dbReference type="NCBI Taxonomy" id="39947"/>
    <lineage>
        <taxon>Eukaryota</taxon>
        <taxon>Viridiplantae</taxon>
        <taxon>Streptophyta</taxon>
        <taxon>Embryophyta</taxon>
        <taxon>Tracheophyta</taxon>
        <taxon>Spermatophyta</taxon>
        <taxon>Magnoliopsida</taxon>
        <taxon>Liliopsida</taxon>
        <taxon>Poales</taxon>
        <taxon>Poaceae</taxon>
        <taxon>BOP clade</taxon>
        <taxon>Oryzoideae</taxon>
        <taxon>Oryzeae</taxon>
        <taxon>Oryzinae</taxon>
        <taxon>Oryza</taxon>
        <taxon>Oryza sativa</taxon>
    </lineage>
</organism>
<feature type="chain" id="PRO_0000433834" description="Two-component response regulator ORR10">
    <location>
        <begin position="1"/>
        <end position="201"/>
    </location>
</feature>
<feature type="domain" description="Response regulatory" evidence="2">
    <location>
        <begin position="10"/>
        <end position="142"/>
    </location>
</feature>
<feature type="region of interest" description="Disordered" evidence="3">
    <location>
        <begin position="149"/>
        <end position="201"/>
    </location>
</feature>
<feature type="compositionally biased region" description="Low complexity" evidence="3">
    <location>
        <begin position="158"/>
        <end position="180"/>
    </location>
</feature>
<feature type="modified residue" description="4-aspartylphosphate" evidence="2">
    <location>
        <position position="75"/>
    </location>
</feature>
<name>ORR10_ORYSJ</name>
<dbReference type="EMBL" id="BR000257">
    <property type="protein sequence ID" value="FAA00261.1"/>
    <property type="molecule type" value="Genomic_DNA"/>
</dbReference>
<dbReference type="EMBL" id="AB249660">
    <property type="protein sequence ID" value="BAE79354.1"/>
    <property type="molecule type" value="mRNA"/>
</dbReference>
<dbReference type="EMBL" id="DP000011">
    <property type="protein sequence ID" value="ABA96406.2"/>
    <property type="molecule type" value="Genomic_DNA"/>
</dbReference>
<dbReference type="EMBL" id="AP008218">
    <property type="protein sequence ID" value="BAF29137.2"/>
    <property type="molecule type" value="Genomic_DNA"/>
</dbReference>
<dbReference type="EMBL" id="AP014968">
    <property type="protein sequence ID" value="BAT15827.1"/>
    <property type="molecule type" value="Genomic_DNA"/>
</dbReference>
<dbReference type="EMBL" id="CM000149">
    <property type="protein sequence ID" value="EEE52746.1"/>
    <property type="molecule type" value="Genomic_DNA"/>
</dbReference>
<dbReference type="RefSeq" id="XP_015619630.1">
    <property type="nucleotide sequence ID" value="XM_015764144.1"/>
</dbReference>
<dbReference type="SMR" id="Q2QXY3"/>
<dbReference type="FunCoup" id="Q2QXY3">
    <property type="interactions" value="37"/>
</dbReference>
<dbReference type="STRING" id="39947.Q2QXY3"/>
<dbReference type="PaxDb" id="39947-Q2QXY3"/>
<dbReference type="EnsemblPlants" id="Os12t0139400-01">
    <property type="protein sequence ID" value="Os12t0139400-01"/>
    <property type="gene ID" value="Os12g0139400"/>
</dbReference>
<dbReference type="Gramene" id="Os12t0139400-01">
    <property type="protein sequence ID" value="Os12t0139400-01"/>
    <property type="gene ID" value="Os12g0139400"/>
</dbReference>
<dbReference type="KEGG" id="dosa:Os12g0139400"/>
<dbReference type="eggNOG" id="KOG1601">
    <property type="taxonomic scope" value="Eukaryota"/>
</dbReference>
<dbReference type="HOGENOM" id="CLU_000445_69_5_1"/>
<dbReference type="InParanoid" id="Q2QXY3"/>
<dbReference type="OMA" id="LEQQEPM"/>
<dbReference type="OrthoDB" id="60033at2759"/>
<dbReference type="Proteomes" id="UP000000763">
    <property type="component" value="Chromosome 12"/>
</dbReference>
<dbReference type="Proteomes" id="UP000007752">
    <property type="component" value="Chromosome 12"/>
</dbReference>
<dbReference type="Proteomes" id="UP000059680">
    <property type="component" value="Chromosome 12"/>
</dbReference>
<dbReference type="GO" id="GO:0005634">
    <property type="term" value="C:nucleus"/>
    <property type="evidence" value="ECO:0000314"/>
    <property type="project" value="UniProtKB"/>
</dbReference>
<dbReference type="GO" id="GO:0009736">
    <property type="term" value="P:cytokinin-activated signaling pathway"/>
    <property type="evidence" value="ECO:0007669"/>
    <property type="project" value="UniProtKB-KW"/>
</dbReference>
<dbReference type="GO" id="GO:0000160">
    <property type="term" value="P:phosphorelay signal transduction system"/>
    <property type="evidence" value="ECO:0007669"/>
    <property type="project" value="UniProtKB-KW"/>
</dbReference>
<dbReference type="CDD" id="cd17581">
    <property type="entry name" value="REC_typeA_ARR"/>
    <property type="match status" value="1"/>
</dbReference>
<dbReference type="FunFam" id="3.40.50.2300:FF:000389">
    <property type="entry name" value="Two-component response regulator ORR9"/>
    <property type="match status" value="1"/>
</dbReference>
<dbReference type="Gene3D" id="3.40.50.2300">
    <property type="match status" value="1"/>
</dbReference>
<dbReference type="InterPro" id="IPR045279">
    <property type="entry name" value="ARR-like"/>
</dbReference>
<dbReference type="InterPro" id="IPR011006">
    <property type="entry name" value="CheY-like_superfamily"/>
</dbReference>
<dbReference type="InterPro" id="IPR001789">
    <property type="entry name" value="Sig_transdc_resp-reg_receiver"/>
</dbReference>
<dbReference type="PANTHER" id="PTHR43874">
    <property type="entry name" value="TWO-COMPONENT RESPONSE REGULATOR"/>
    <property type="match status" value="1"/>
</dbReference>
<dbReference type="PANTHER" id="PTHR43874:SF167">
    <property type="entry name" value="TWO-COMPONENT RESPONSE REGULATOR ARR9"/>
    <property type="match status" value="1"/>
</dbReference>
<dbReference type="Pfam" id="PF00072">
    <property type="entry name" value="Response_reg"/>
    <property type="match status" value="1"/>
</dbReference>
<dbReference type="SMART" id="SM00448">
    <property type="entry name" value="REC"/>
    <property type="match status" value="1"/>
</dbReference>
<dbReference type="SUPFAM" id="SSF52172">
    <property type="entry name" value="CheY-like"/>
    <property type="match status" value="1"/>
</dbReference>
<dbReference type="PROSITE" id="PS50110">
    <property type="entry name" value="RESPONSE_REGULATORY"/>
    <property type="match status" value="1"/>
</dbReference>
<comment type="function">
    <text evidence="1">Functions as a response regulator involved in His-to-Asp phosphorelay signal transduction system. Phosphorylation of the Asp residue in the receiver domain activates the ability of the protein to promote the transcription of target genes. Type-A response regulators seem to act as negative regulators of the cytokinin signaling.</text>
</comment>
<comment type="subcellular location">
    <subcellularLocation>
        <location evidence="6">Nucleus</location>
    </subcellularLocation>
</comment>
<comment type="induction">
    <text evidence="5 6">By cytokinin in roots and shoots.</text>
</comment>
<comment type="PTM">
    <text evidence="10">Two-component system major event consists of a His-to-Asp phosphorelay between a sensor histidine kinase (HK) and a response regulator (RR). In plants, the His-to-Asp phosphorelay involves an additional intermediate named Histidine-containing phosphotransfer protein (HPt). This multistep phosphorelay consists of a His-Asp-His-Asp sequential transfer of a phosphate group between first a His and an Asp of the HK protein, followed by the transfer to a conserved His of the HPt protein and finally the transfer to an Asp in the receiver domain of the RR protein.</text>
</comment>
<comment type="disruption phenotype">
    <text evidence="4">Dwarf, viviparous, lesion mimic and sterility phenotypes.</text>
</comment>
<comment type="similarity">
    <text evidence="10">Belongs to the ARR family. Type-A subfamily.</text>
</comment>
<accession>Q2QXY3</accession>
<accession>A0A0P0Y7E3</accession>
<accession>Q0IQ78</accession>
<accession>Q2HWG5</accession>
<reference key="1">
    <citation type="journal article" date="2006" name="Gene">
        <title>Identification and characterization of cytokinin-signalling gene families in rice.</title>
        <authorList>
            <person name="Ito Y."/>
            <person name="Kurata N."/>
        </authorList>
    </citation>
    <scope>NUCLEOTIDE SEQUENCE [GENOMIC DNA]</scope>
    <scope>INDUCTION BY CYTOKININ</scope>
    <source>
        <strain>cv. Nipponbare</strain>
    </source>
</reference>
<reference key="2">
    <citation type="journal article" date="2007" name="Plant Cell Physiol.">
        <title>Overexpression of a type-A response regulator alters rice morphology and cytokinin metabolism.</title>
        <authorList>
            <person name="Hirose N."/>
            <person name="Makita N."/>
            <person name="Kojima M."/>
            <person name="Kamada-Nobusada T."/>
            <person name="Sakakibara H."/>
        </authorList>
    </citation>
    <scope>NUCLEOTIDE SEQUENCE [MRNA]</scope>
    <source>
        <strain>cv. Nipponbare</strain>
    </source>
</reference>
<reference key="3">
    <citation type="journal article" date="2005" name="BMC Biol.">
        <title>The sequence of rice chromosomes 11 and 12, rich in disease resistance genes and recent gene duplications.</title>
        <authorList>
            <consortium name="The rice chromosomes 11 and 12 sequencing consortia"/>
        </authorList>
    </citation>
    <scope>NUCLEOTIDE SEQUENCE [LARGE SCALE GENOMIC DNA]</scope>
    <source>
        <strain>cv. Nipponbare</strain>
    </source>
</reference>
<reference key="4">
    <citation type="journal article" date="2005" name="Nature">
        <title>The map-based sequence of the rice genome.</title>
        <authorList>
            <consortium name="International rice genome sequencing project (IRGSP)"/>
        </authorList>
    </citation>
    <scope>NUCLEOTIDE SEQUENCE [LARGE SCALE GENOMIC DNA]</scope>
    <source>
        <strain>cv. Nipponbare</strain>
    </source>
</reference>
<reference key="5">
    <citation type="journal article" date="2008" name="Nucleic Acids Res.">
        <title>The rice annotation project database (RAP-DB): 2008 update.</title>
        <authorList>
            <consortium name="The rice annotation project (RAP)"/>
        </authorList>
    </citation>
    <scope>GENOME REANNOTATION</scope>
    <source>
        <strain>cv. Nipponbare</strain>
    </source>
</reference>
<reference key="6">
    <citation type="journal article" date="2013" name="Rice">
        <title>Improvement of the Oryza sativa Nipponbare reference genome using next generation sequence and optical map data.</title>
        <authorList>
            <person name="Kawahara Y."/>
            <person name="de la Bastide M."/>
            <person name="Hamilton J.P."/>
            <person name="Kanamori H."/>
            <person name="McCombie W.R."/>
            <person name="Ouyang S."/>
            <person name="Schwartz D.C."/>
            <person name="Tanaka T."/>
            <person name="Wu J."/>
            <person name="Zhou S."/>
            <person name="Childs K.L."/>
            <person name="Davidson R.M."/>
            <person name="Lin H."/>
            <person name="Quesada-Ocampo L."/>
            <person name="Vaillancourt B."/>
            <person name="Sakai H."/>
            <person name="Lee S.S."/>
            <person name="Kim J."/>
            <person name="Numa H."/>
            <person name="Itoh T."/>
            <person name="Buell C.R."/>
            <person name="Matsumoto T."/>
        </authorList>
    </citation>
    <scope>GENOME REANNOTATION</scope>
    <source>
        <strain>cv. Nipponbare</strain>
    </source>
</reference>
<reference key="7">
    <citation type="journal article" date="2005" name="PLoS Biol.">
        <title>The genomes of Oryza sativa: a history of duplications.</title>
        <authorList>
            <person name="Yu J."/>
            <person name="Wang J."/>
            <person name="Lin W."/>
            <person name="Li S."/>
            <person name="Li H."/>
            <person name="Zhou J."/>
            <person name="Ni P."/>
            <person name="Dong W."/>
            <person name="Hu S."/>
            <person name="Zeng C."/>
            <person name="Zhang J."/>
            <person name="Zhang Y."/>
            <person name="Li R."/>
            <person name="Xu Z."/>
            <person name="Li S."/>
            <person name="Li X."/>
            <person name="Zheng H."/>
            <person name="Cong L."/>
            <person name="Lin L."/>
            <person name="Yin J."/>
            <person name="Geng J."/>
            <person name="Li G."/>
            <person name="Shi J."/>
            <person name="Liu J."/>
            <person name="Lv H."/>
            <person name="Li J."/>
            <person name="Wang J."/>
            <person name="Deng Y."/>
            <person name="Ran L."/>
            <person name="Shi X."/>
            <person name="Wang X."/>
            <person name="Wu Q."/>
            <person name="Li C."/>
            <person name="Ren X."/>
            <person name="Wang J."/>
            <person name="Wang X."/>
            <person name="Li D."/>
            <person name="Liu D."/>
            <person name="Zhang X."/>
            <person name="Ji Z."/>
            <person name="Zhao W."/>
            <person name="Sun Y."/>
            <person name="Zhang Z."/>
            <person name="Bao J."/>
            <person name="Han Y."/>
            <person name="Dong L."/>
            <person name="Ji J."/>
            <person name="Chen P."/>
            <person name="Wu S."/>
            <person name="Liu J."/>
            <person name="Xiao Y."/>
            <person name="Bu D."/>
            <person name="Tan J."/>
            <person name="Yang L."/>
            <person name="Ye C."/>
            <person name="Zhang J."/>
            <person name="Xu J."/>
            <person name="Zhou Y."/>
            <person name="Yu Y."/>
            <person name="Zhang B."/>
            <person name="Zhuang S."/>
            <person name="Wei H."/>
            <person name="Liu B."/>
            <person name="Lei M."/>
            <person name="Yu H."/>
            <person name="Li Y."/>
            <person name="Xu H."/>
            <person name="Wei S."/>
            <person name="He X."/>
            <person name="Fang L."/>
            <person name="Zhang Z."/>
            <person name="Zhang Y."/>
            <person name="Huang X."/>
            <person name="Su Z."/>
            <person name="Tong W."/>
            <person name="Li J."/>
            <person name="Tong Z."/>
            <person name="Li S."/>
            <person name="Ye J."/>
            <person name="Wang L."/>
            <person name="Fang L."/>
            <person name="Lei T."/>
            <person name="Chen C.-S."/>
            <person name="Chen H.-C."/>
            <person name="Xu Z."/>
            <person name="Li H."/>
            <person name="Huang H."/>
            <person name="Zhang F."/>
            <person name="Xu H."/>
            <person name="Li N."/>
            <person name="Zhao C."/>
            <person name="Li S."/>
            <person name="Dong L."/>
            <person name="Huang Y."/>
            <person name="Li L."/>
            <person name="Xi Y."/>
            <person name="Qi Q."/>
            <person name="Li W."/>
            <person name="Zhang B."/>
            <person name="Hu W."/>
            <person name="Zhang Y."/>
            <person name="Tian X."/>
            <person name="Jiao Y."/>
            <person name="Liang X."/>
            <person name="Jin J."/>
            <person name="Gao L."/>
            <person name="Zheng W."/>
            <person name="Hao B."/>
            <person name="Liu S.-M."/>
            <person name="Wang W."/>
            <person name="Yuan L."/>
            <person name="Cao M."/>
            <person name="McDermott J."/>
            <person name="Samudrala R."/>
            <person name="Wang J."/>
            <person name="Wong G.K.-S."/>
            <person name="Yang H."/>
        </authorList>
    </citation>
    <scope>NUCLEOTIDE SEQUENCE [LARGE SCALE GENOMIC DNA]</scope>
    <source>
        <strain>cv. Nipponbare</strain>
    </source>
</reference>
<reference key="8">
    <citation type="journal article" date="2006" name="Plant Physiol.">
        <title>Whole-genome analysis of Oryza sativa reveals similar architecture of two-component signaling machinery with Arabidopsis.</title>
        <authorList>
            <person name="Pareek A."/>
            <person name="Singh A."/>
            <person name="Kumar M."/>
            <person name="Kushwaha H.R."/>
            <person name="Lynn A.M."/>
            <person name="Singla-Pareek S.L."/>
        </authorList>
    </citation>
    <scope>DISRUPTION PHENOTYPE</scope>
</reference>
<reference key="9">
    <citation type="journal article" date="2007" name="Plant Physiol.">
        <title>Nomenclature for two-component signaling elements of rice.</title>
        <authorList>
            <person name="Schaller G.E."/>
            <person name="Doi K."/>
            <person name="Hwang I."/>
            <person name="Kieber J.J."/>
            <person name="Khurana J.P."/>
            <person name="Kurata N."/>
            <person name="Mizuno T."/>
            <person name="Pareek A."/>
            <person name="Shiu S.H."/>
            <person name="Wu P."/>
            <person name="Yip W.K."/>
        </authorList>
    </citation>
    <scope>GENE FAMILY</scope>
    <scope>NOMENCLATURE</scope>
</reference>
<reference key="10">
    <citation type="journal article" date="2012" name="Plant Physiol.">
        <title>Characterization of genes involved in cytokinin signaling and metabolism from rice.</title>
        <authorList>
            <person name="Tsai Y.C."/>
            <person name="Weir N.R."/>
            <person name="Hill K."/>
            <person name="Zhang W."/>
            <person name="Kim H.J."/>
            <person name="Shiu S.H."/>
            <person name="Schaller G.E."/>
            <person name="Kieber J.J."/>
        </authorList>
    </citation>
    <scope>SUBCELLULAR LOCATION</scope>
    <scope>INDUCTION BY CYTOKININ</scope>
</reference>
<proteinExistence type="evidence at transcript level"/>